<reference key="1">
    <citation type="journal article" date="1997" name="Insect Biochem. Mol. Biol.">
        <title>Sequence studies of proteins from larval and pupal cuticle of the yellow meal worm, Tenebrio molitor.</title>
        <authorList>
            <person name="Andersen S.O."/>
            <person name="Rafn K."/>
            <person name="Roepstorff P."/>
        </authorList>
    </citation>
    <scope>PROTEIN SEQUENCE</scope>
    <scope>MASS SPECTROMETRY</scope>
    <source>
        <tissue>Cuticle</tissue>
    </source>
</reference>
<organism>
    <name type="scientific">Tenebrio molitor</name>
    <name type="common">Yellow mealworm beetle</name>
    <dbReference type="NCBI Taxonomy" id="7067"/>
    <lineage>
        <taxon>Eukaryota</taxon>
        <taxon>Metazoa</taxon>
        <taxon>Ecdysozoa</taxon>
        <taxon>Arthropoda</taxon>
        <taxon>Hexapoda</taxon>
        <taxon>Insecta</taxon>
        <taxon>Pterygota</taxon>
        <taxon>Neoptera</taxon>
        <taxon>Endopterygota</taxon>
        <taxon>Coleoptera</taxon>
        <taxon>Polyphaga</taxon>
        <taxon>Cucujiformia</taxon>
        <taxon>Tenebrionidae</taxon>
        <taxon>Tenebrio</taxon>
    </lineage>
</organism>
<name>CUA1A_TENMO</name>
<proteinExistence type="evidence at protein level"/>
<sequence length="174" mass="17692">GLVGAPATLSTAPIAYGGYGGYGAYGGSLLRAAPIARVASPLAYAAPVARVAAPLAYAAPYARAAVAAPVAVAKTVVADEYDPNPQYSFGYDVQDGLTGDSKNQVESRSGDVVQGSYSLVDPDGTRRTVEYTADPINGFNAVVHREPLVAKAVVAAPAIAKVHAPLAYSGGYLH</sequence>
<comment type="function">
    <text>Component of the cuticle of the larva of Tenebrio molitor.</text>
</comment>
<comment type="domain">
    <text>The tetrapeptide (A-A-P-[AV]) repeats found throughout the protein are also present in many proteins constituting the protective envelope of other species.</text>
</comment>
<comment type="mass spectrometry" mass="17692.5" method="Electrospray" evidence="2"/>
<evidence type="ECO:0000255" key="1">
    <source>
        <dbReference type="PROSITE-ProRule" id="PRU00497"/>
    </source>
</evidence>
<evidence type="ECO:0000269" key="2">
    <source>
    </source>
</evidence>
<feature type="chain" id="PRO_0000196132" description="Larval cuticle protein A1A">
    <location>
        <begin position="1"/>
        <end position="174"/>
    </location>
</feature>
<feature type="repeat" description="1">
    <location>
        <begin position="45"/>
        <end position="48"/>
    </location>
</feature>
<feature type="repeat" description="2">
    <location>
        <begin position="67"/>
        <end position="70"/>
    </location>
</feature>
<feature type="domain" description="Chitin-binding type R&amp;R" evidence="1">
    <location>
        <begin position="84"/>
        <end position="150"/>
    </location>
</feature>
<feature type="repeat" description="3">
    <location>
        <begin position="155"/>
        <end position="158"/>
    </location>
</feature>
<accession>P80681</accession>
<keyword id="KW-0193">Cuticle</keyword>
<keyword id="KW-0903">Direct protein sequencing</keyword>
<keyword id="KW-0677">Repeat</keyword>
<dbReference type="GO" id="GO:0031012">
    <property type="term" value="C:extracellular matrix"/>
    <property type="evidence" value="ECO:0007669"/>
    <property type="project" value="TreeGrafter"/>
</dbReference>
<dbReference type="GO" id="GO:0005615">
    <property type="term" value="C:extracellular space"/>
    <property type="evidence" value="ECO:0007669"/>
    <property type="project" value="TreeGrafter"/>
</dbReference>
<dbReference type="GO" id="GO:0042302">
    <property type="term" value="F:structural constituent of cuticle"/>
    <property type="evidence" value="ECO:0007669"/>
    <property type="project" value="UniProtKB-KW"/>
</dbReference>
<dbReference type="InterPro" id="IPR031311">
    <property type="entry name" value="CHIT_BIND_RR_consensus"/>
</dbReference>
<dbReference type="InterPro" id="IPR000618">
    <property type="entry name" value="Insect_cuticle"/>
</dbReference>
<dbReference type="InterPro" id="IPR051217">
    <property type="entry name" value="Insect_Cuticle_Struc_Prot"/>
</dbReference>
<dbReference type="PANTHER" id="PTHR12236:SF94">
    <property type="entry name" value="CCP84AA-RELATED"/>
    <property type="match status" value="1"/>
</dbReference>
<dbReference type="PANTHER" id="PTHR12236">
    <property type="entry name" value="STRUCTURAL CONTITUENT OF CUTICLE"/>
    <property type="match status" value="1"/>
</dbReference>
<dbReference type="Pfam" id="PF00379">
    <property type="entry name" value="Chitin_bind_4"/>
    <property type="match status" value="1"/>
</dbReference>
<dbReference type="PRINTS" id="PR00947">
    <property type="entry name" value="CUTICLE"/>
</dbReference>
<dbReference type="PROSITE" id="PS00233">
    <property type="entry name" value="CHIT_BIND_RR_1"/>
    <property type="match status" value="1"/>
</dbReference>
<dbReference type="PROSITE" id="PS51155">
    <property type="entry name" value="CHIT_BIND_RR_2"/>
    <property type="match status" value="1"/>
</dbReference>
<protein>
    <recommendedName>
        <fullName>Larval cuticle protein A1A</fullName>
    </recommendedName>
    <alternativeName>
        <fullName>TM-LCP A1A</fullName>
        <shortName>TM-A1A</shortName>
    </alternativeName>
</protein>